<reference key="1">
    <citation type="journal article" date="2009" name="Appl. Environ. Microbiol.">
        <title>Three genomes from the phylum Acidobacteria provide insight into the lifestyles of these microorganisms in soils.</title>
        <authorList>
            <person name="Ward N.L."/>
            <person name="Challacombe J.F."/>
            <person name="Janssen P.H."/>
            <person name="Henrissat B."/>
            <person name="Coutinho P.M."/>
            <person name="Wu M."/>
            <person name="Xie G."/>
            <person name="Haft D.H."/>
            <person name="Sait M."/>
            <person name="Badger J."/>
            <person name="Barabote R.D."/>
            <person name="Bradley B."/>
            <person name="Brettin T.S."/>
            <person name="Brinkac L.M."/>
            <person name="Bruce D."/>
            <person name="Creasy T."/>
            <person name="Daugherty S.C."/>
            <person name="Davidsen T.M."/>
            <person name="DeBoy R.T."/>
            <person name="Detter J.C."/>
            <person name="Dodson R.J."/>
            <person name="Durkin A.S."/>
            <person name="Ganapathy A."/>
            <person name="Gwinn-Giglio M."/>
            <person name="Han C.S."/>
            <person name="Khouri H."/>
            <person name="Kiss H."/>
            <person name="Kothari S.P."/>
            <person name="Madupu R."/>
            <person name="Nelson K.E."/>
            <person name="Nelson W.C."/>
            <person name="Paulsen I."/>
            <person name="Penn K."/>
            <person name="Ren Q."/>
            <person name="Rosovitz M.J."/>
            <person name="Selengut J.D."/>
            <person name="Shrivastava S."/>
            <person name="Sullivan S.A."/>
            <person name="Tapia R."/>
            <person name="Thompson L.S."/>
            <person name="Watkins K.L."/>
            <person name="Yang Q."/>
            <person name="Yu C."/>
            <person name="Zafar N."/>
            <person name="Zhou L."/>
            <person name="Kuske C.R."/>
        </authorList>
    </citation>
    <scope>NUCLEOTIDE SEQUENCE [LARGE SCALE GENOMIC DNA]</scope>
    <source>
        <strain>Ellin345</strain>
    </source>
</reference>
<protein>
    <recommendedName>
        <fullName evidence="1">UPF0102 protein Acid345_3985</fullName>
    </recommendedName>
</protein>
<proteinExistence type="inferred from homology"/>
<dbReference type="EMBL" id="CP000360">
    <property type="protein sequence ID" value="ABF42985.1"/>
    <property type="molecule type" value="Genomic_DNA"/>
</dbReference>
<dbReference type="SMR" id="Q1IJG5"/>
<dbReference type="STRING" id="204669.Acid345_3985"/>
<dbReference type="EnsemblBacteria" id="ABF42985">
    <property type="protein sequence ID" value="ABF42985"/>
    <property type="gene ID" value="Acid345_3985"/>
</dbReference>
<dbReference type="KEGG" id="aba:Acid345_3985"/>
<dbReference type="eggNOG" id="COG0792">
    <property type="taxonomic scope" value="Bacteria"/>
</dbReference>
<dbReference type="HOGENOM" id="CLU_115353_2_1_0"/>
<dbReference type="Proteomes" id="UP000002432">
    <property type="component" value="Chromosome"/>
</dbReference>
<dbReference type="GO" id="GO:0003676">
    <property type="term" value="F:nucleic acid binding"/>
    <property type="evidence" value="ECO:0007669"/>
    <property type="project" value="InterPro"/>
</dbReference>
<dbReference type="CDD" id="cd20736">
    <property type="entry name" value="PoNe_Nuclease"/>
    <property type="match status" value="1"/>
</dbReference>
<dbReference type="Gene3D" id="3.40.1350.10">
    <property type="match status" value="1"/>
</dbReference>
<dbReference type="HAMAP" id="MF_00048">
    <property type="entry name" value="UPF0102"/>
    <property type="match status" value="1"/>
</dbReference>
<dbReference type="InterPro" id="IPR011335">
    <property type="entry name" value="Restrct_endonuc-II-like"/>
</dbReference>
<dbReference type="InterPro" id="IPR011856">
    <property type="entry name" value="tRNA_endonuc-like_dom_sf"/>
</dbReference>
<dbReference type="InterPro" id="IPR003509">
    <property type="entry name" value="UPF0102_YraN-like"/>
</dbReference>
<dbReference type="PANTHER" id="PTHR34039">
    <property type="entry name" value="UPF0102 PROTEIN YRAN"/>
    <property type="match status" value="1"/>
</dbReference>
<dbReference type="PANTHER" id="PTHR34039:SF1">
    <property type="entry name" value="UPF0102 PROTEIN YRAN"/>
    <property type="match status" value="1"/>
</dbReference>
<dbReference type="Pfam" id="PF02021">
    <property type="entry name" value="UPF0102"/>
    <property type="match status" value="1"/>
</dbReference>
<dbReference type="SUPFAM" id="SSF52980">
    <property type="entry name" value="Restriction endonuclease-like"/>
    <property type="match status" value="1"/>
</dbReference>
<gene>
    <name type="ordered locus">Acid345_3985</name>
</gene>
<comment type="similarity">
    <text evidence="1">Belongs to the UPF0102 family.</text>
</comment>
<name>Y3985_KORVE</name>
<feature type="chain" id="PRO_0000336109" description="UPF0102 protein Acid345_3985">
    <location>
        <begin position="1"/>
        <end position="143"/>
    </location>
</feature>
<accession>Q1IJG5</accession>
<sequence length="143" mass="16583">MRVFTQLAVRLLDAILPEPDEPEHLKTGRRGEELAYFFLRKHGYTIVARNFRTPWHKSELDIIGWNGGILCFIEVKTRTTRDIATAEAAVDDTKRNDLRRVARHYLRQCAENTPTRFDIVTVYLDRPKPEITILKSAFLLSGE</sequence>
<keyword id="KW-1185">Reference proteome</keyword>
<evidence type="ECO:0000255" key="1">
    <source>
        <dbReference type="HAMAP-Rule" id="MF_00048"/>
    </source>
</evidence>
<organism>
    <name type="scientific">Koribacter versatilis (strain Ellin345)</name>
    <dbReference type="NCBI Taxonomy" id="204669"/>
    <lineage>
        <taxon>Bacteria</taxon>
        <taxon>Pseudomonadati</taxon>
        <taxon>Acidobacteriota</taxon>
        <taxon>Terriglobia</taxon>
        <taxon>Terriglobales</taxon>
        <taxon>Candidatus Korobacteraceae</taxon>
        <taxon>Candidatus Korobacter</taxon>
    </lineage>
</organism>